<reference key="1">
    <citation type="journal article" date="2006" name="Proc. Natl. Acad. Sci. U.S.A.">
        <title>Burkholderia xenovorans LB400 harbors a multi-replicon, 9.73-Mbp genome shaped for versatility.</title>
        <authorList>
            <person name="Chain P.S.G."/>
            <person name="Denef V.J."/>
            <person name="Konstantinidis K.T."/>
            <person name="Vergez L.M."/>
            <person name="Agullo L."/>
            <person name="Reyes V.L."/>
            <person name="Hauser L."/>
            <person name="Cordova M."/>
            <person name="Gomez L."/>
            <person name="Gonzalez M."/>
            <person name="Land M."/>
            <person name="Lao V."/>
            <person name="Larimer F."/>
            <person name="LiPuma J.J."/>
            <person name="Mahenthiralingam E."/>
            <person name="Malfatti S.A."/>
            <person name="Marx C.J."/>
            <person name="Parnell J.J."/>
            <person name="Ramette A."/>
            <person name="Richardson P."/>
            <person name="Seeger M."/>
            <person name="Smith D."/>
            <person name="Spilker T."/>
            <person name="Sul W.J."/>
            <person name="Tsoi T.V."/>
            <person name="Ulrich L.E."/>
            <person name="Zhulin I.B."/>
            <person name="Tiedje J.M."/>
        </authorList>
    </citation>
    <scope>NUCLEOTIDE SEQUENCE [LARGE SCALE GENOMIC DNA]</scope>
    <source>
        <strain>LB400</strain>
    </source>
</reference>
<comment type="function">
    <text evidence="1">Together with LptE, is involved in the assembly of lipopolysaccharide (LPS) at the surface of the outer membrane.</text>
</comment>
<comment type="subunit">
    <text evidence="1">Component of the lipopolysaccharide transport and assembly complex. Interacts with LptE and LptA.</text>
</comment>
<comment type="subcellular location">
    <subcellularLocation>
        <location evidence="1">Cell outer membrane</location>
    </subcellularLocation>
</comment>
<comment type="similarity">
    <text evidence="1">Belongs to the LptD family.</text>
</comment>
<proteinExistence type="inferred from homology"/>
<feature type="signal peptide" evidence="1">
    <location>
        <begin position="1"/>
        <end position="39"/>
    </location>
</feature>
<feature type="chain" id="PRO_0000281597" description="LPS-assembly protein LptD">
    <location>
        <begin position="40"/>
        <end position="789"/>
    </location>
</feature>
<organism>
    <name type="scientific">Paraburkholderia xenovorans (strain LB400)</name>
    <dbReference type="NCBI Taxonomy" id="266265"/>
    <lineage>
        <taxon>Bacteria</taxon>
        <taxon>Pseudomonadati</taxon>
        <taxon>Pseudomonadota</taxon>
        <taxon>Betaproteobacteria</taxon>
        <taxon>Burkholderiales</taxon>
        <taxon>Burkholderiaceae</taxon>
        <taxon>Paraburkholderia</taxon>
    </lineage>
</organism>
<sequence length="789" mass="86740">MPPRQLSQTTPSCAVVPRKRRLVAALIAVPGLMPALAHAQLVGEAAQPQPIDAPWGMQLAPQLEERPLQPGQKPATFVLGDTTSGTTDQDMAAKGSAEVRRNTVVIKADALHYDQDTDMADAYGSVHVVNNGNSFVGPEAHMRVDSSEGFMTAPKYHFNVTGGSGSAERVDLLDNERSVFTKGTYTACACADDPAWYIKGSEFDFDTGADEGVAHNGVLFFQGFPVFASPWLSFPLSGERRSGVLPPTFSLSSSNGFELSVPYYFNIAPNRDLTLTPRLISKRGVQLQSTFRYLSPTYSGSITGEFLPDDHLTKTNRYALYIQHNQNFGNGFGGYIYYNKVSDNTYPEDLSSSVNQFMNGTQLLYQQEAGLTYNNGPWSVLAREQHWQTLTPSVAPYGREPQLNVKYAKYNVGGFDYGAEADYSNFRITTADMTQGQRVMFNPYLSYSVVGPGYFVTPKVQWHFASYNLNHLSDADVAAGTPKNFTESIPTLTFDTGLVFDRSVRIFGQDYIQTLEPRLYYVYTPYRNQQSAPLFDTADSDFGLAEIFTPNTFVGNDRIADANRLTAALTTRFIDAATGDERARFVIAQQYYFQDQRVTLQSTQTSAQATHSDLIAGASLKLGAGFASETAFQYNADNNQLVKTSVGFGFSPATGKVINVAYRYTRANTTLDNTPINQVLISGQWPLAHRVYGVGRFNYDLGGHRIVDGLVGLQYDADCWTLGAGIQRYANGLNTSGQNQSSTRFLAQLTFKGLSSVDNGLMTAFRSSVAGYTPLPPPPPPESRFTNYE</sequence>
<dbReference type="EMBL" id="CP000270">
    <property type="protein sequence ID" value="ABE28975.1"/>
    <property type="molecule type" value="Genomic_DNA"/>
</dbReference>
<dbReference type="RefSeq" id="WP_011486801.1">
    <property type="nucleotide sequence ID" value="NC_007951.1"/>
</dbReference>
<dbReference type="SMR" id="Q145L4"/>
<dbReference type="STRING" id="266265.Bxe_A4024"/>
<dbReference type="KEGG" id="bxb:DR64_1701"/>
<dbReference type="KEGG" id="bxe:Bxe_A4024"/>
<dbReference type="PATRIC" id="fig|266265.5.peg.461"/>
<dbReference type="eggNOG" id="COG1452">
    <property type="taxonomic scope" value="Bacteria"/>
</dbReference>
<dbReference type="OrthoDB" id="9760225at2"/>
<dbReference type="Proteomes" id="UP000001817">
    <property type="component" value="Chromosome 1"/>
</dbReference>
<dbReference type="GO" id="GO:0009279">
    <property type="term" value="C:cell outer membrane"/>
    <property type="evidence" value="ECO:0007669"/>
    <property type="project" value="UniProtKB-SubCell"/>
</dbReference>
<dbReference type="GO" id="GO:1990351">
    <property type="term" value="C:transporter complex"/>
    <property type="evidence" value="ECO:0007669"/>
    <property type="project" value="TreeGrafter"/>
</dbReference>
<dbReference type="GO" id="GO:0043165">
    <property type="term" value="P:Gram-negative-bacterium-type cell outer membrane assembly"/>
    <property type="evidence" value="ECO:0007669"/>
    <property type="project" value="UniProtKB-UniRule"/>
</dbReference>
<dbReference type="GO" id="GO:0015920">
    <property type="term" value="P:lipopolysaccharide transport"/>
    <property type="evidence" value="ECO:0007669"/>
    <property type="project" value="InterPro"/>
</dbReference>
<dbReference type="HAMAP" id="MF_01411">
    <property type="entry name" value="LPS_assembly_LptD"/>
    <property type="match status" value="1"/>
</dbReference>
<dbReference type="InterPro" id="IPR020889">
    <property type="entry name" value="LipoPS_assembly_LptD"/>
</dbReference>
<dbReference type="InterPro" id="IPR050218">
    <property type="entry name" value="LptD"/>
</dbReference>
<dbReference type="InterPro" id="IPR007543">
    <property type="entry name" value="LptD_C"/>
</dbReference>
<dbReference type="PANTHER" id="PTHR30189">
    <property type="entry name" value="LPS-ASSEMBLY PROTEIN"/>
    <property type="match status" value="1"/>
</dbReference>
<dbReference type="PANTHER" id="PTHR30189:SF1">
    <property type="entry name" value="LPS-ASSEMBLY PROTEIN LPTD"/>
    <property type="match status" value="1"/>
</dbReference>
<dbReference type="Pfam" id="PF04453">
    <property type="entry name" value="LptD"/>
    <property type="match status" value="1"/>
</dbReference>
<name>LPTD_PARXL</name>
<protein>
    <recommendedName>
        <fullName evidence="1">LPS-assembly protein LptD</fullName>
    </recommendedName>
</protein>
<keyword id="KW-0998">Cell outer membrane</keyword>
<keyword id="KW-0472">Membrane</keyword>
<keyword id="KW-1185">Reference proteome</keyword>
<keyword id="KW-0732">Signal</keyword>
<gene>
    <name evidence="1" type="primary">lptD</name>
    <name type="synonym">imp</name>
    <name type="synonym">ostA</name>
    <name type="ordered locus">Bxeno_A0437</name>
    <name type="ORF">Bxe_A4024</name>
</gene>
<accession>Q145L4</accession>
<evidence type="ECO:0000255" key="1">
    <source>
        <dbReference type="HAMAP-Rule" id="MF_01411"/>
    </source>
</evidence>